<organism>
    <name type="scientific">Staphylococcus haemolyticus (strain JCSC1435)</name>
    <dbReference type="NCBI Taxonomy" id="279808"/>
    <lineage>
        <taxon>Bacteria</taxon>
        <taxon>Bacillati</taxon>
        <taxon>Bacillota</taxon>
        <taxon>Bacilli</taxon>
        <taxon>Bacillales</taxon>
        <taxon>Staphylococcaceae</taxon>
        <taxon>Staphylococcus</taxon>
    </lineage>
</organism>
<comment type="function">
    <text evidence="1">Has hemolytic activity and also inhibits the growth of gonococci.</text>
</comment>
<comment type="subcellular location">
    <subcellularLocation>
        <location evidence="1">Secreted</location>
    </subcellularLocation>
</comment>
<comment type="similarity">
    <text evidence="2">Belongs to the staphylococcal hemolytic protein family.</text>
</comment>
<gene>
    <name type="ordered locus">SH1742</name>
</gene>
<gene>
    <name type="ordered locus">SH1744</name>
</gene>
<accession>Q4L5M2</accession>
<name>GGI2_STAHJ</name>
<evidence type="ECO:0000250" key="1"/>
<evidence type="ECO:0000305" key="2"/>
<keyword id="KW-0044">Antibiotic</keyword>
<keyword id="KW-0929">Antimicrobial</keyword>
<keyword id="KW-0204">Cytolysis</keyword>
<keyword id="KW-0354">Hemolysis</keyword>
<keyword id="KW-0964">Secreted</keyword>
<keyword id="KW-0800">Toxin</keyword>
<keyword id="KW-0843">Virulence</keyword>
<sequence length="44" mass="4725">MEKIANAVKSAIEAGQNQDWTKLGTSILDIVSNGVTELSKIFGF</sequence>
<protein>
    <recommendedName>
        <fullName>Antibacterial protein 2 homolog</fullName>
    </recommendedName>
</protein>
<feature type="chain" id="PRO_0000302136" description="Antibacterial protein 2 homolog">
    <location>
        <begin position="1"/>
        <end position="44"/>
    </location>
</feature>
<proteinExistence type="inferred from homology"/>
<reference key="1">
    <citation type="journal article" date="2005" name="J. Bacteriol.">
        <title>Whole-genome sequencing of Staphylococcus haemolyticus uncovers the extreme plasticity of its genome and the evolution of human-colonizing staphylococcal species.</title>
        <authorList>
            <person name="Takeuchi F."/>
            <person name="Watanabe S."/>
            <person name="Baba T."/>
            <person name="Yuzawa H."/>
            <person name="Ito T."/>
            <person name="Morimoto Y."/>
            <person name="Kuroda M."/>
            <person name="Cui L."/>
            <person name="Takahashi M."/>
            <person name="Ankai A."/>
            <person name="Baba S."/>
            <person name="Fukui S."/>
            <person name="Lee J.C."/>
            <person name="Hiramatsu K."/>
        </authorList>
    </citation>
    <scope>NUCLEOTIDE SEQUENCE [LARGE SCALE GENOMIC DNA]</scope>
    <source>
        <strain>JCSC1435</strain>
    </source>
</reference>
<dbReference type="EMBL" id="AP006716">
    <property type="protein sequence ID" value="BAE05051.1"/>
    <property type="molecule type" value="Genomic_DNA"/>
</dbReference>
<dbReference type="EMBL" id="AP006716">
    <property type="protein sequence ID" value="BAE05053.1"/>
    <property type="molecule type" value="Genomic_DNA"/>
</dbReference>
<dbReference type="RefSeq" id="WP_011276027.1">
    <property type="nucleotide sequence ID" value="NC_007168.1"/>
</dbReference>
<dbReference type="SMR" id="Q4L5M2"/>
<dbReference type="KEGG" id="sha:SH1742"/>
<dbReference type="KEGG" id="sha:SH1744"/>
<dbReference type="HOGENOM" id="CLU_207329_1_0_9"/>
<dbReference type="OrthoDB" id="2397642at2"/>
<dbReference type="Proteomes" id="UP000000543">
    <property type="component" value="Chromosome"/>
</dbReference>
<dbReference type="GO" id="GO:0005576">
    <property type="term" value="C:extracellular region"/>
    <property type="evidence" value="ECO:0007669"/>
    <property type="project" value="UniProtKB-SubCell"/>
</dbReference>
<dbReference type="GO" id="GO:0090729">
    <property type="term" value="F:toxin activity"/>
    <property type="evidence" value="ECO:0007669"/>
    <property type="project" value="UniProtKB-KW"/>
</dbReference>
<dbReference type="GO" id="GO:0042742">
    <property type="term" value="P:defense response to bacterium"/>
    <property type="evidence" value="ECO:0007669"/>
    <property type="project" value="UniProtKB-KW"/>
</dbReference>
<dbReference type="GO" id="GO:0031640">
    <property type="term" value="P:killing of cells of another organism"/>
    <property type="evidence" value="ECO:0007669"/>
    <property type="project" value="UniProtKB-KW"/>
</dbReference>
<dbReference type="InterPro" id="IPR008846">
    <property type="entry name" value="PSMbeta"/>
</dbReference>
<dbReference type="Pfam" id="PF05480">
    <property type="entry name" value="PSMbeta"/>
    <property type="match status" value="1"/>
</dbReference>